<sequence length="400" mass="45513">MKLKTLSVGEVNNYVKKLVENDFILKNLNVKGEISNLKFHSSGHIYFSLKDENSKVNCIMFKNNAVNLDFRLEEGMKVEIKARLGVYHKEGTYQLYCENIKKAGIGELFEEFHKLKKELSEEGIFDEKYKRALPKFPKRIGIITAKTGAAVRDIINVIQRRNKSLDIILYPAKVQGENAADSIIEGIRYFNNEKSVDVIILGRGGGFIEELWAFNNRDLAYEIFNSRIPTVSAVGHEVDFTISDFVSDMRAPTPSAAGELVSPSLQEMINDLLNKKEFLHRAIDRKFLNAKRDVDLLYKGLKGNNPKDIIEKRIKEVNSLEEKLNFLGKRKIDKAKDELIALNSILQTLNPLNTLGRGYSVIMDKEDKVINNVSELKKNDMVKVIMKDGSVNIDIKIINE</sequence>
<keyword id="KW-0963">Cytoplasm</keyword>
<keyword id="KW-0269">Exonuclease</keyword>
<keyword id="KW-0378">Hydrolase</keyword>
<keyword id="KW-0540">Nuclease</keyword>
<name>EX7L_CLOPS</name>
<organism>
    <name type="scientific">Clostridium perfringens (strain SM101 / Type A)</name>
    <dbReference type="NCBI Taxonomy" id="289380"/>
    <lineage>
        <taxon>Bacteria</taxon>
        <taxon>Bacillati</taxon>
        <taxon>Bacillota</taxon>
        <taxon>Clostridia</taxon>
        <taxon>Eubacteriales</taxon>
        <taxon>Clostridiaceae</taxon>
        <taxon>Clostridium</taxon>
    </lineage>
</organism>
<reference key="1">
    <citation type="journal article" date="2006" name="Genome Res.">
        <title>Skewed genomic variability in strains of the toxigenic bacterial pathogen, Clostridium perfringens.</title>
        <authorList>
            <person name="Myers G.S.A."/>
            <person name="Rasko D.A."/>
            <person name="Cheung J.K."/>
            <person name="Ravel J."/>
            <person name="Seshadri R."/>
            <person name="DeBoy R.T."/>
            <person name="Ren Q."/>
            <person name="Varga J."/>
            <person name="Awad M.M."/>
            <person name="Brinkac L.M."/>
            <person name="Daugherty S.C."/>
            <person name="Haft D.H."/>
            <person name="Dodson R.J."/>
            <person name="Madupu R."/>
            <person name="Nelson W.C."/>
            <person name="Rosovitz M.J."/>
            <person name="Sullivan S.A."/>
            <person name="Khouri H."/>
            <person name="Dimitrov G.I."/>
            <person name="Watkins K.L."/>
            <person name="Mulligan S."/>
            <person name="Benton J."/>
            <person name="Radune D."/>
            <person name="Fisher D.J."/>
            <person name="Atkins H.S."/>
            <person name="Hiscox T."/>
            <person name="Jost B.H."/>
            <person name="Billington S.J."/>
            <person name="Songer J.G."/>
            <person name="McClane B.A."/>
            <person name="Titball R.W."/>
            <person name="Rood J.I."/>
            <person name="Melville S.B."/>
            <person name="Paulsen I.T."/>
        </authorList>
    </citation>
    <scope>NUCLEOTIDE SEQUENCE [LARGE SCALE GENOMIC DNA]</scope>
    <source>
        <strain>SM101 / Type A</strain>
    </source>
</reference>
<dbReference type="EC" id="3.1.11.6" evidence="1"/>
<dbReference type="EMBL" id="CP000312">
    <property type="protein sequence ID" value="ABG87412.1"/>
    <property type="molecule type" value="Genomic_DNA"/>
</dbReference>
<dbReference type="RefSeq" id="WP_011592691.1">
    <property type="nucleotide sequence ID" value="NC_008262.1"/>
</dbReference>
<dbReference type="SMR" id="Q0SS02"/>
<dbReference type="KEGG" id="cpr:CPR_1790"/>
<dbReference type="Proteomes" id="UP000001824">
    <property type="component" value="Chromosome"/>
</dbReference>
<dbReference type="GO" id="GO:0005737">
    <property type="term" value="C:cytoplasm"/>
    <property type="evidence" value="ECO:0007669"/>
    <property type="project" value="UniProtKB-SubCell"/>
</dbReference>
<dbReference type="GO" id="GO:0009318">
    <property type="term" value="C:exodeoxyribonuclease VII complex"/>
    <property type="evidence" value="ECO:0007669"/>
    <property type="project" value="InterPro"/>
</dbReference>
<dbReference type="GO" id="GO:0008855">
    <property type="term" value="F:exodeoxyribonuclease VII activity"/>
    <property type="evidence" value="ECO:0007669"/>
    <property type="project" value="UniProtKB-UniRule"/>
</dbReference>
<dbReference type="GO" id="GO:0003676">
    <property type="term" value="F:nucleic acid binding"/>
    <property type="evidence" value="ECO:0007669"/>
    <property type="project" value="InterPro"/>
</dbReference>
<dbReference type="GO" id="GO:0006308">
    <property type="term" value="P:DNA catabolic process"/>
    <property type="evidence" value="ECO:0007669"/>
    <property type="project" value="UniProtKB-UniRule"/>
</dbReference>
<dbReference type="CDD" id="cd04489">
    <property type="entry name" value="ExoVII_LU_OBF"/>
    <property type="match status" value="1"/>
</dbReference>
<dbReference type="HAMAP" id="MF_00378">
    <property type="entry name" value="Exonuc_7_L"/>
    <property type="match status" value="1"/>
</dbReference>
<dbReference type="InterPro" id="IPR003753">
    <property type="entry name" value="Exonuc_VII_L"/>
</dbReference>
<dbReference type="InterPro" id="IPR020579">
    <property type="entry name" value="Exonuc_VII_lsu_C"/>
</dbReference>
<dbReference type="InterPro" id="IPR025824">
    <property type="entry name" value="OB-fold_nuc-bd_dom"/>
</dbReference>
<dbReference type="NCBIfam" id="TIGR00237">
    <property type="entry name" value="xseA"/>
    <property type="match status" value="1"/>
</dbReference>
<dbReference type="PANTHER" id="PTHR30008">
    <property type="entry name" value="EXODEOXYRIBONUCLEASE 7 LARGE SUBUNIT"/>
    <property type="match status" value="1"/>
</dbReference>
<dbReference type="PANTHER" id="PTHR30008:SF0">
    <property type="entry name" value="EXODEOXYRIBONUCLEASE 7 LARGE SUBUNIT"/>
    <property type="match status" value="1"/>
</dbReference>
<dbReference type="Pfam" id="PF02601">
    <property type="entry name" value="Exonuc_VII_L"/>
    <property type="match status" value="2"/>
</dbReference>
<dbReference type="Pfam" id="PF13742">
    <property type="entry name" value="tRNA_anti_2"/>
    <property type="match status" value="1"/>
</dbReference>
<gene>
    <name evidence="1" type="primary">xseA</name>
    <name type="ordered locus">CPR_1790</name>
</gene>
<comment type="function">
    <text evidence="1">Bidirectionally degrades single-stranded DNA into large acid-insoluble oligonucleotides, which are then degraded further into small acid-soluble oligonucleotides.</text>
</comment>
<comment type="catalytic activity">
    <reaction evidence="1">
        <text>Exonucleolytic cleavage in either 5'- to 3'- or 3'- to 5'-direction to yield nucleoside 5'-phosphates.</text>
        <dbReference type="EC" id="3.1.11.6"/>
    </reaction>
</comment>
<comment type="subunit">
    <text evidence="1">Heterooligomer composed of large and small subunits.</text>
</comment>
<comment type="subcellular location">
    <subcellularLocation>
        <location evidence="1">Cytoplasm</location>
    </subcellularLocation>
</comment>
<comment type="similarity">
    <text evidence="1">Belongs to the XseA family.</text>
</comment>
<accession>Q0SS02</accession>
<feature type="chain" id="PRO_0000273654" description="Exodeoxyribonuclease 7 large subunit">
    <location>
        <begin position="1"/>
        <end position="400"/>
    </location>
</feature>
<evidence type="ECO:0000255" key="1">
    <source>
        <dbReference type="HAMAP-Rule" id="MF_00378"/>
    </source>
</evidence>
<proteinExistence type="inferred from homology"/>
<protein>
    <recommendedName>
        <fullName evidence="1">Exodeoxyribonuclease 7 large subunit</fullName>
        <ecNumber evidence="1">3.1.11.6</ecNumber>
    </recommendedName>
    <alternativeName>
        <fullName evidence="1">Exodeoxyribonuclease VII large subunit</fullName>
        <shortName evidence="1">Exonuclease VII large subunit</shortName>
    </alternativeName>
</protein>